<sequence>MSIKPLHDRVVVKPIEADEVSAGGIVIPDSAKEKSTKGEVVAIGAGKPLDNGSLRAPVVKVGDKVIYGQYAGSSYKSEGVEYKVLREDDILAVIG</sequence>
<accession>Q2NY28</accession>
<organism>
    <name type="scientific">Xanthomonas oryzae pv. oryzae (strain MAFF 311018)</name>
    <dbReference type="NCBI Taxonomy" id="342109"/>
    <lineage>
        <taxon>Bacteria</taxon>
        <taxon>Pseudomonadati</taxon>
        <taxon>Pseudomonadota</taxon>
        <taxon>Gammaproteobacteria</taxon>
        <taxon>Lysobacterales</taxon>
        <taxon>Lysobacteraceae</taxon>
        <taxon>Xanthomonas</taxon>
    </lineage>
</organism>
<gene>
    <name evidence="1" type="primary">groES</name>
    <name evidence="1" type="synonym">groS</name>
    <name type="ordered locus">XOO4044</name>
</gene>
<dbReference type="EMBL" id="AP008229">
    <property type="protein sequence ID" value="BAE70799.1"/>
    <property type="molecule type" value="Genomic_DNA"/>
</dbReference>
<dbReference type="RefSeq" id="WP_003483210.1">
    <property type="nucleotide sequence ID" value="NC_007705.1"/>
</dbReference>
<dbReference type="SMR" id="Q2NY28"/>
<dbReference type="KEGG" id="xom:XOO4044"/>
<dbReference type="HOGENOM" id="CLU_132825_2_0_6"/>
<dbReference type="GO" id="GO:0005737">
    <property type="term" value="C:cytoplasm"/>
    <property type="evidence" value="ECO:0007669"/>
    <property type="project" value="UniProtKB-SubCell"/>
</dbReference>
<dbReference type="GO" id="GO:0005524">
    <property type="term" value="F:ATP binding"/>
    <property type="evidence" value="ECO:0007669"/>
    <property type="project" value="InterPro"/>
</dbReference>
<dbReference type="GO" id="GO:0046872">
    <property type="term" value="F:metal ion binding"/>
    <property type="evidence" value="ECO:0007669"/>
    <property type="project" value="TreeGrafter"/>
</dbReference>
<dbReference type="GO" id="GO:0044183">
    <property type="term" value="F:protein folding chaperone"/>
    <property type="evidence" value="ECO:0007669"/>
    <property type="project" value="InterPro"/>
</dbReference>
<dbReference type="GO" id="GO:0051087">
    <property type="term" value="F:protein-folding chaperone binding"/>
    <property type="evidence" value="ECO:0007669"/>
    <property type="project" value="TreeGrafter"/>
</dbReference>
<dbReference type="GO" id="GO:0051082">
    <property type="term" value="F:unfolded protein binding"/>
    <property type="evidence" value="ECO:0007669"/>
    <property type="project" value="TreeGrafter"/>
</dbReference>
<dbReference type="GO" id="GO:0051085">
    <property type="term" value="P:chaperone cofactor-dependent protein refolding"/>
    <property type="evidence" value="ECO:0007669"/>
    <property type="project" value="TreeGrafter"/>
</dbReference>
<dbReference type="CDD" id="cd00320">
    <property type="entry name" value="cpn10"/>
    <property type="match status" value="1"/>
</dbReference>
<dbReference type="FunFam" id="2.30.33.40:FF:000001">
    <property type="entry name" value="10 kDa chaperonin"/>
    <property type="match status" value="1"/>
</dbReference>
<dbReference type="Gene3D" id="2.30.33.40">
    <property type="entry name" value="GroES chaperonin"/>
    <property type="match status" value="1"/>
</dbReference>
<dbReference type="HAMAP" id="MF_00580">
    <property type="entry name" value="CH10"/>
    <property type="match status" value="1"/>
</dbReference>
<dbReference type="InterPro" id="IPR020818">
    <property type="entry name" value="Chaperonin_GroES"/>
</dbReference>
<dbReference type="InterPro" id="IPR037124">
    <property type="entry name" value="Chaperonin_GroES_sf"/>
</dbReference>
<dbReference type="InterPro" id="IPR018369">
    <property type="entry name" value="Chaprnonin_Cpn10_CS"/>
</dbReference>
<dbReference type="InterPro" id="IPR011032">
    <property type="entry name" value="GroES-like_sf"/>
</dbReference>
<dbReference type="NCBIfam" id="NF001527">
    <property type="entry name" value="PRK00364.1-2"/>
    <property type="match status" value="1"/>
</dbReference>
<dbReference type="NCBIfam" id="NF001531">
    <property type="entry name" value="PRK00364.2-2"/>
    <property type="match status" value="1"/>
</dbReference>
<dbReference type="NCBIfam" id="NF001533">
    <property type="entry name" value="PRK00364.2-4"/>
    <property type="match status" value="1"/>
</dbReference>
<dbReference type="PANTHER" id="PTHR10772">
    <property type="entry name" value="10 KDA HEAT SHOCK PROTEIN"/>
    <property type="match status" value="1"/>
</dbReference>
<dbReference type="PANTHER" id="PTHR10772:SF58">
    <property type="entry name" value="CO-CHAPERONIN GROES"/>
    <property type="match status" value="1"/>
</dbReference>
<dbReference type="Pfam" id="PF00166">
    <property type="entry name" value="Cpn10"/>
    <property type="match status" value="1"/>
</dbReference>
<dbReference type="PRINTS" id="PR00297">
    <property type="entry name" value="CHAPERONIN10"/>
</dbReference>
<dbReference type="SMART" id="SM00883">
    <property type="entry name" value="Cpn10"/>
    <property type="match status" value="1"/>
</dbReference>
<dbReference type="SUPFAM" id="SSF50129">
    <property type="entry name" value="GroES-like"/>
    <property type="match status" value="1"/>
</dbReference>
<dbReference type="PROSITE" id="PS00681">
    <property type="entry name" value="CHAPERONINS_CPN10"/>
    <property type="match status" value="1"/>
</dbReference>
<reference key="1">
    <citation type="journal article" date="2005" name="Jpn. Agric. Res. Q.">
        <title>Genome sequence of Xanthomonas oryzae pv. oryzae suggests contribution of large numbers of effector genes and insertion sequences to its race diversity.</title>
        <authorList>
            <person name="Ochiai H."/>
            <person name="Inoue Y."/>
            <person name="Takeya M."/>
            <person name="Sasaki A."/>
            <person name="Kaku H."/>
        </authorList>
    </citation>
    <scope>NUCLEOTIDE SEQUENCE [LARGE SCALE GENOMIC DNA]</scope>
    <source>
        <strain>MAFF 311018</strain>
    </source>
</reference>
<evidence type="ECO:0000255" key="1">
    <source>
        <dbReference type="HAMAP-Rule" id="MF_00580"/>
    </source>
</evidence>
<name>CH10_XANOM</name>
<feature type="chain" id="PRO_1000025405" description="Co-chaperonin GroES">
    <location>
        <begin position="1"/>
        <end position="95"/>
    </location>
</feature>
<keyword id="KW-0143">Chaperone</keyword>
<keyword id="KW-0963">Cytoplasm</keyword>
<proteinExistence type="inferred from homology"/>
<protein>
    <recommendedName>
        <fullName evidence="1">Co-chaperonin GroES</fullName>
    </recommendedName>
    <alternativeName>
        <fullName evidence="1">10 kDa chaperonin</fullName>
    </alternativeName>
    <alternativeName>
        <fullName evidence="1">Chaperonin-10</fullName>
        <shortName evidence="1">Cpn10</shortName>
    </alternativeName>
</protein>
<comment type="function">
    <text evidence="1">Together with the chaperonin GroEL, plays an essential role in assisting protein folding. The GroEL-GroES system forms a nano-cage that allows encapsulation of the non-native substrate proteins and provides a physical environment optimized to promote and accelerate protein folding. GroES binds to the apical surface of the GroEL ring, thereby capping the opening of the GroEL channel.</text>
</comment>
<comment type="subunit">
    <text evidence="1">Heptamer of 7 subunits arranged in a ring. Interacts with the chaperonin GroEL.</text>
</comment>
<comment type="subcellular location">
    <subcellularLocation>
        <location evidence="1">Cytoplasm</location>
    </subcellularLocation>
</comment>
<comment type="similarity">
    <text evidence="1">Belongs to the GroES chaperonin family.</text>
</comment>